<comment type="function">
    <text evidence="1">Required to facilitate the formation of correct disulfide bonds in some periplasmic proteins and for the assembly of the periplasmic c-type cytochromes. Acts by transferring electrons from cytoplasmic thioredoxin to the periplasm. This transfer involves a cascade of disulfide bond formation and reduction steps.</text>
</comment>
<comment type="catalytic activity">
    <reaction evidence="1">
        <text>[protein]-dithiol + NAD(+) = [protein]-disulfide + NADH + H(+)</text>
        <dbReference type="Rhea" id="RHEA:18749"/>
        <dbReference type="Rhea" id="RHEA-COMP:10593"/>
        <dbReference type="Rhea" id="RHEA-COMP:10594"/>
        <dbReference type="ChEBI" id="CHEBI:15378"/>
        <dbReference type="ChEBI" id="CHEBI:29950"/>
        <dbReference type="ChEBI" id="CHEBI:50058"/>
        <dbReference type="ChEBI" id="CHEBI:57540"/>
        <dbReference type="ChEBI" id="CHEBI:57945"/>
        <dbReference type="EC" id="1.8.1.8"/>
    </reaction>
</comment>
<comment type="catalytic activity">
    <reaction evidence="1">
        <text>[protein]-dithiol + NADP(+) = [protein]-disulfide + NADPH + H(+)</text>
        <dbReference type="Rhea" id="RHEA:18753"/>
        <dbReference type="Rhea" id="RHEA-COMP:10593"/>
        <dbReference type="Rhea" id="RHEA-COMP:10594"/>
        <dbReference type="ChEBI" id="CHEBI:15378"/>
        <dbReference type="ChEBI" id="CHEBI:29950"/>
        <dbReference type="ChEBI" id="CHEBI:50058"/>
        <dbReference type="ChEBI" id="CHEBI:57783"/>
        <dbReference type="ChEBI" id="CHEBI:58349"/>
        <dbReference type="EC" id="1.8.1.8"/>
    </reaction>
</comment>
<comment type="subcellular location">
    <subcellularLocation>
        <location evidence="1">Cell inner membrane</location>
        <topology evidence="1">Multi-pass membrane protein</topology>
    </subcellularLocation>
</comment>
<comment type="similarity">
    <text evidence="1">Belongs to the thioredoxin family. DsbD subfamily.</text>
</comment>
<protein>
    <recommendedName>
        <fullName evidence="1">Thiol:disulfide interchange protein DsbD</fullName>
        <ecNumber evidence="1">1.8.1.8</ecNumber>
    </recommendedName>
    <alternativeName>
        <fullName evidence="1">Protein-disulfide reductase</fullName>
        <shortName evidence="1">Disulfide reductase</shortName>
    </alternativeName>
</protein>
<dbReference type="EC" id="1.8.1.8" evidence="1"/>
<dbReference type="EMBL" id="CP000671">
    <property type="protein sequence ID" value="ABQ98840.1"/>
    <property type="molecule type" value="Genomic_DNA"/>
</dbReference>
<dbReference type="SMR" id="A5UDI9"/>
<dbReference type="KEGG" id="hip:CGSHiEE_07605"/>
<dbReference type="HOGENOM" id="CLU_014657_3_0_6"/>
<dbReference type="GO" id="GO:0005886">
    <property type="term" value="C:plasma membrane"/>
    <property type="evidence" value="ECO:0007669"/>
    <property type="project" value="UniProtKB-SubCell"/>
</dbReference>
<dbReference type="GO" id="GO:0009055">
    <property type="term" value="F:electron transfer activity"/>
    <property type="evidence" value="ECO:0007669"/>
    <property type="project" value="UniProtKB-UniRule"/>
</dbReference>
<dbReference type="GO" id="GO:0047134">
    <property type="term" value="F:protein-disulfide reductase [NAD(P)H] activity"/>
    <property type="evidence" value="ECO:0007669"/>
    <property type="project" value="UniProtKB-UniRule"/>
</dbReference>
<dbReference type="GO" id="GO:0045454">
    <property type="term" value="P:cell redox homeostasis"/>
    <property type="evidence" value="ECO:0007669"/>
    <property type="project" value="TreeGrafter"/>
</dbReference>
<dbReference type="GO" id="GO:0017004">
    <property type="term" value="P:cytochrome complex assembly"/>
    <property type="evidence" value="ECO:0007669"/>
    <property type="project" value="UniProtKB-UniRule"/>
</dbReference>
<dbReference type="CDD" id="cd02953">
    <property type="entry name" value="DsbDgamma"/>
    <property type="match status" value="1"/>
</dbReference>
<dbReference type="FunFam" id="2.60.40.1250:FF:000002">
    <property type="entry name" value="Thiol:disulfide interchange protein DsbD"/>
    <property type="match status" value="1"/>
</dbReference>
<dbReference type="FunFam" id="3.40.30.10:FF:000116">
    <property type="entry name" value="Thiol:disulfide interchange protein DsbD"/>
    <property type="match status" value="1"/>
</dbReference>
<dbReference type="Gene3D" id="3.40.30.10">
    <property type="entry name" value="Glutaredoxin"/>
    <property type="match status" value="1"/>
</dbReference>
<dbReference type="Gene3D" id="2.60.40.1250">
    <property type="entry name" value="Thiol:disulfide interchange protein DsbD, N-terminal domain"/>
    <property type="match status" value="1"/>
</dbReference>
<dbReference type="HAMAP" id="MF_00399">
    <property type="entry name" value="DbsD"/>
    <property type="match status" value="1"/>
</dbReference>
<dbReference type="InterPro" id="IPR003834">
    <property type="entry name" value="Cyt_c_assmbl_TM_dom"/>
</dbReference>
<dbReference type="InterPro" id="IPR035671">
    <property type="entry name" value="DsbD_gamma"/>
</dbReference>
<dbReference type="InterPro" id="IPR028250">
    <property type="entry name" value="DsbDN"/>
</dbReference>
<dbReference type="InterPro" id="IPR036929">
    <property type="entry name" value="DsbDN_sf"/>
</dbReference>
<dbReference type="InterPro" id="IPR022910">
    <property type="entry name" value="Thiol_diS_interchange_DbsD"/>
</dbReference>
<dbReference type="InterPro" id="IPR012336">
    <property type="entry name" value="Thioredoxin-like_fold"/>
</dbReference>
<dbReference type="InterPro" id="IPR036249">
    <property type="entry name" value="Thioredoxin-like_sf"/>
</dbReference>
<dbReference type="InterPro" id="IPR017937">
    <property type="entry name" value="Thioredoxin_CS"/>
</dbReference>
<dbReference type="InterPro" id="IPR013766">
    <property type="entry name" value="Thioredoxin_domain"/>
</dbReference>
<dbReference type="NCBIfam" id="NF001419">
    <property type="entry name" value="PRK00293.1"/>
    <property type="match status" value="1"/>
</dbReference>
<dbReference type="PANTHER" id="PTHR32234">
    <property type="entry name" value="THIOL:DISULFIDE INTERCHANGE PROTEIN DSBD"/>
    <property type="match status" value="1"/>
</dbReference>
<dbReference type="PANTHER" id="PTHR32234:SF0">
    <property type="entry name" value="THIOL:DISULFIDE INTERCHANGE PROTEIN DSBD"/>
    <property type="match status" value="1"/>
</dbReference>
<dbReference type="Pfam" id="PF11412">
    <property type="entry name" value="DsbD_N"/>
    <property type="match status" value="1"/>
</dbReference>
<dbReference type="Pfam" id="PF02683">
    <property type="entry name" value="DsbD_TM"/>
    <property type="match status" value="1"/>
</dbReference>
<dbReference type="Pfam" id="PF13098">
    <property type="entry name" value="Thioredoxin_2"/>
    <property type="match status" value="1"/>
</dbReference>
<dbReference type="SUPFAM" id="SSF74863">
    <property type="entry name" value="Thiol:disulfide interchange protein DsbD, N-terminal domain (DsbD-alpha)"/>
    <property type="match status" value="1"/>
</dbReference>
<dbReference type="SUPFAM" id="SSF52833">
    <property type="entry name" value="Thioredoxin-like"/>
    <property type="match status" value="1"/>
</dbReference>
<dbReference type="PROSITE" id="PS00194">
    <property type="entry name" value="THIOREDOXIN_1"/>
    <property type="match status" value="1"/>
</dbReference>
<dbReference type="PROSITE" id="PS51352">
    <property type="entry name" value="THIOREDOXIN_2"/>
    <property type="match status" value="1"/>
</dbReference>
<reference key="1">
    <citation type="journal article" date="2007" name="Genome Biol.">
        <title>Characterization and modeling of the Haemophilus influenzae core and supragenomes based on the complete genomic sequences of Rd and 12 clinical nontypeable strains.</title>
        <authorList>
            <person name="Hogg J.S."/>
            <person name="Hu F.Z."/>
            <person name="Janto B."/>
            <person name="Boissy R."/>
            <person name="Hayes J."/>
            <person name="Keefe R."/>
            <person name="Post J.C."/>
            <person name="Ehrlich G.D."/>
        </authorList>
    </citation>
    <scope>NUCLEOTIDE SEQUENCE [LARGE SCALE GENOMIC DNA]</scope>
    <source>
        <strain>PittEE</strain>
    </source>
</reference>
<gene>
    <name evidence="1" type="primary">dsbD</name>
    <name type="ordered locus">CGSHiEE_07605</name>
</gene>
<keyword id="KW-0997">Cell inner membrane</keyword>
<keyword id="KW-1003">Cell membrane</keyword>
<keyword id="KW-0201">Cytochrome c-type biogenesis</keyword>
<keyword id="KW-1015">Disulfide bond</keyword>
<keyword id="KW-0249">Electron transport</keyword>
<keyword id="KW-0472">Membrane</keyword>
<keyword id="KW-0520">NAD</keyword>
<keyword id="KW-0560">Oxidoreductase</keyword>
<keyword id="KW-0676">Redox-active center</keyword>
<keyword id="KW-0732">Signal</keyword>
<keyword id="KW-0812">Transmembrane</keyword>
<keyword id="KW-1133">Transmembrane helix</keyword>
<keyword id="KW-0813">Transport</keyword>
<organism>
    <name type="scientific">Haemophilus influenzae (strain PittEE)</name>
    <dbReference type="NCBI Taxonomy" id="374930"/>
    <lineage>
        <taxon>Bacteria</taxon>
        <taxon>Pseudomonadati</taxon>
        <taxon>Pseudomonadota</taxon>
        <taxon>Gammaproteobacteria</taxon>
        <taxon>Pasteurellales</taxon>
        <taxon>Pasteurellaceae</taxon>
        <taxon>Haemophilus</taxon>
    </lineage>
</organism>
<sequence length="579" mass="64505">MKKLFLFFTLIFTAFAANSGLFDKKQTFLKVDDAFAFSATLSTDKSQLQAHWDITDGYYLYQDKISAELVGKSNPLSLHTQQAAELHQDPYFGEVKVFTHSIDGIFRGTFNNADDKVEITYQGCTEGFCYPPETKVLRIGDLAISQEQIVEKTVEKNTALLSEQDRLADGLFHSKWTIFGFFLLGLGLAFTPCVLPMLPLLSAIVIGQQQRPNMMRAFSLAFLYVQGMALTYTLLGLAVAAIGLPFQIALQHPYVMIGLSILFVVLALSMFGLFTIQLPNSLQNKLNTWSQKQTSGAFGGAFAMGMIAGLVASPCTSAPLSGALLYVAQSGDLFTGAATLYLLALGMGVPLMLITLFGNKILPKSGEWMNTVKQTFGFVMLALPVFLLSRILPEVWEPRLWAGLATVFFIWFALQMSKNGFGYAIKIISFVLAMVTVQPLQNWIWQTQTTTQSAVENKSVSQVKFKQIKNTEELDRTLAENPHSIAMLDLYADWCVACKEFEKLTFSDPQVQQQFQNILLLQVNMTKNSPENKALMERFNVMGLPTILFFDQQNNEIKGSRVTGFMDADAFSNWLKALH</sequence>
<feature type="signal peptide" evidence="1">
    <location>
        <begin position="1"/>
        <end position="16"/>
    </location>
</feature>
<feature type="chain" id="PRO_1000049609" description="Thiol:disulfide interchange protein DsbD">
    <location>
        <begin position="17"/>
        <end position="579"/>
    </location>
</feature>
<feature type="transmembrane region" description="Helical" evidence="1">
    <location>
        <begin position="178"/>
        <end position="198"/>
    </location>
</feature>
<feature type="transmembrane region" description="Helical" evidence="1">
    <location>
        <begin position="230"/>
        <end position="250"/>
    </location>
</feature>
<feature type="transmembrane region" description="Helical" evidence="1">
    <location>
        <begin position="254"/>
        <end position="274"/>
    </location>
</feature>
<feature type="transmembrane region" description="Helical" evidence="1">
    <location>
        <begin position="296"/>
        <end position="316"/>
    </location>
</feature>
<feature type="transmembrane region" description="Helical" evidence="1">
    <location>
        <begin position="337"/>
        <end position="357"/>
    </location>
</feature>
<feature type="transmembrane region" description="Helical" evidence="1">
    <location>
        <begin position="376"/>
        <end position="396"/>
    </location>
</feature>
<feature type="transmembrane region" description="Helical" evidence="1">
    <location>
        <begin position="397"/>
        <end position="417"/>
    </location>
</feature>
<feature type="transmembrane region" description="Helical" evidence="1">
    <location>
        <begin position="420"/>
        <end position="440"/>
    </location>
</feature>
<feature type="domain" description="Thioredoxin" evidence="1">
    <location>
        <begin position="449"/>
        <end position="579"/>
    </location>
</feature>
<feature type="disulfide bond" description="Redox-active" evidence="1">
    <location>
        <begin position="124"/>
        <end position="129"/>
    </location>
</feature>
<feature type="disulfide bond" description="Redox-active" evidence="1">
    <location>
        <begin position="193"/>
        <end position="315"/>
    </location>
</feature>
<feature type="disulfide bond" description="Redox-active" evidence="1">
    <location>
        <begin position="495"/>
        <end position="498"/>
    </location>
</feature>
<name>DSBD_HAEIE</name>
<accession>A5UDI9</accession>
<proteinExistence type="inferred from homology"/>
<evidence type="ECO:0000255" key="1">
    <source>
        <dbReference type="HAMAP-Rule" id="MF_00399"/>
    </source>
</evidence>